<feature type="chain" id="PRO_1000116163" description="Adenine phosphoribosyltransferase">
    <location>
        <begin position="1"/>
        <end position="170"/>
    </location>
</feature>
<comment type="function">
    <text evidence="1">Catalyzes a salvage reaction resulting in the formation of AMP, that is energically less costly than de novo synthesis.</text>
</comment>
<comment type="catalytic activity">
    <reaction evidence="1">
        <text>AMP + diphosphate = 5-phospho-alpha-D-ribose 1-diphosphate + adenine</text>
        <dbReference type="Rhea" id="RHEA:16609"/>
        <dbReference type="ChEBI" id="CHEBI:16708"/>
        <dbReference type="ChEBI" id="CHEBI:33019"/>
        <dbReference type="ChEBI" id="CHEBI:58017"/>
        <dbReference type="ChEBI" id="CHEBI:456215"/>
        <dbReference type="EC" id="2.4.2.7"/>
    </reaction>
</comment>
<comment type="pathway">
    <text evidence="1">Purine metabolism; AMP biosynthesis via salvage pathway; AMP from adenine: step 1/1.</text>
</comment>
<comment type="subunit">
    <text evidence="1">Homodimer.</text>
</comment>
<comment type="subcellular location">
    <subcellularLocation>
        <location evidence="1">Cytoplasm</location>
    </subcellularLocation>
</comment>
<comment type="similarity">
    <text evidence="1">Belongs to the purine/pyrimidine phosphoribosyltransferase family.</text>
</comment>
<accession>B7IIS0</accession>
<gene>
    <name evidence="1" type="primary">apt</name>
    <name type="ordered locus">BCG9842_B0708</name>
</gene>
<evidence type="ECO:0000255" key="1">
    <source>
        <dbReference type="HAMAP-Rule" id="MF_00004"/>
    </source>
</evidence>
<proteinExistence type="inferred from homology"/>
<organism>
    <name type="scientific">Bacillus cereus (strain G9842)</name>
    <dbReference type="NCBI Taxonomy" id="405531"/>
    <lineage>
        <taxon>Bacteria</taxon>
        <taxon>Bacillati</taxon>
        <taxon>Bacillota</taxon>
        <taxon>Bacilli</taxon>
        <taxon>Bacillales</taxon>
        <taxon>Bacillaceae</taxon>
        <taxon>Bacillus</taxon>
        <taxon>Bacillus cereus group</taxon>
    </lineage>
</organism>
<reference key="1">
    <citation type="submission" date="2008-10" db="EMBL/GenBank/DDBJ databases">
        <title>Genome sequence of Bacillus cereus G9842.</title>
        <authorList>
            <person name="Dodson R.J."/>
            <person name="Durkin A.S."/>
            <person name="Rosovitz M.J."/>
            <person name="Rasko D.A."/>
            <person name="Hoffmaster A."/>
            <person name="Ravel J."/>
            <person name="Sutton G."/>
        </authorList>
    </citation>
    <scope>NUCLEOTIDE SEQUENCE [LARGE SCALE GENOMIC DNA]</scope>
    <source>
        <strain>G9842</strain>
    </source>
</reference>
<keyword id="KW-0963">Cytoplasm</keyword>
<keyword id="KW-0328">Glycosyltransferase</keyword>
<keyword id="KW-0660">Purine salvage</keyword>
<keyword id="KW-0808">Transferase</keyword>
<protein>
    <recommendedName>
        <fullName evidence="1">Adenine phosphoribosyltransferase</fullName>
        <shortName evidence="1">APRT</shortName>
        <ecNumber evidence="1">2.4.2.7</ecNumber>
    </recommendedName>
</protein>
<dbReference type="EC" id="2.4.2.7" evidence="1"/>
<dbReference type="EMBL" id="CP001186">
    <property type="protein sequence ID" value="ACK94881.1"/>
    <property type="molecule type" value="Genomic_DNA"/>
</dbReference>
<dbReference type="RefSeq" id="WP_000346215.1">
    <property type="nucleotide sequence ID" value="NC_011772.1"/>
</dbReference>
<dbReference type="SMR" id="B7IIS0"/>
<dbReference type="KEGG" id="bcg:BCG9842_B0708"/>
<dbReference type="HOGENOM" id="CLU_063339_3_0_9"/>
<dbReference type="UniPathway" id="UPA00588">
    <property type="reaction ID" value="UER00646"/>
</dbReference>
<dbReference type="Proteomes" id="UP000006744">
    <property type="component" value="Chromosome"/>
</dbReference>
<dbReference type="GO" id="GO:0005737">
    <property type="term" value="C:cytoplasm"/>
    <property type="evidence" value="ECO:0007669"/>
    <property type="project" value="UniProtKB-SubCell"/>
</dbReference>
<dbReference type="GO" id="GO:0002055">
    <property type="term" value="F:adenine binding"/>
    <property type="evidence" value="ECO:0007669"/>
    <property type="project" value="TreeGrafter"/>
</dbReference>
<dbReference type="GO" id="GO:0003999">
    <property type="term" value="F:adenine phosphoribosyltransferase activity"/>
    <property type="evidence" value="ECO:0007669"/>
    <property type="project" value="UniProtKB-UniRule"/>
</dbReference>
<dbReference type="GO" id="GO:0016208">
    <property type="term" value="F:AMP binding"/>
    <property type="evidence" value="ECO:0007669"/>
    <property type="project" value="TreeGrafter"/>
</dbReference>
<dbReference type="GO" id="GO:0006168">
    <property type="term" value="P:adenine salvage"/>
    <property type="evidence" value="ECO:0007669"/>
    <property type="project" value="InterPro"/>
</dbReference>
<dbReference type="GO" id="GO:0044209">
    <property type="term" value="P:AMP salvage"/>
    <property type="evidence" value="ECO:0007669"/>
    <property type="project" value="UniProtKB-UniRule"/>
</dbReference>
<dbReference type="GO" id="GO:0006166">
    <property type="term" value="P:purine ribonucleoside salvage"/>
    <property type="evidence" value="ECO:0007669"/>
    <property type="project" value="UniProtKB-KW"/>
</dbReference>
<dbReference type="CDD" id="cd06223">
    <property type="entry name" value="PRTases_typeI"/>
    <property type="match status" value="1"/>
</dbReference>
<dbReference type="FunFam" id="3.40.50.2020:FF:000004">
    <property type="entry name" value="Adenine phosphoribosyltransferase"/>
    <property type="match status" value="1"/>
</dbReference>
<dbReference type="Gene3D" id="3.40.50.2020">
    <property type="match status" value="1"/>
</dbReference>
<dbReference type="HAMAP" id="MF_00004">
    <property type="entry name" value="Aden_phosphoribosyltr"/>
    <property type="match status" value="1"/>
</dbReference>
<dbReference type="InterPro" id="IPR005764">
    <property type="entry name" value="Ade_phspho_trans"/>
</dbReference>
<dbReference type="InterPro" id="IPR000836">
    <property type="entry name" value="PRibTrfase_dom"/>
</dbReference>
<dbReference type="InterPro" id="IPR029057">
    <property type="entry name" value="PRTase-like"/>
</dbReference>
<dbReference type="InterPro" id="IPR050054">
    <property type="entry name" value="UPRTase/APRTase"/>
</dbReference>
<dbReference type="NCBIfam" id="TIGR01090">
    <property type="entry name" value="apt"/>
    <property type="match status" value="1"/>
</dbReference>
<dbReference type="NCBIfam" id="NF002633">
    <property type="entry name" value="PRK02304.1-2"/>
    <property type="match status" value="1"/>
</dbReference>
<dbReference type="NCBIfam" id="NF002634">
    <property type="entry name" value="PRK02304.1-3"/>
    <property type="match status" value="1"/>
</dbReference>
<dbReference type="NCBIfam" id="NF002636">
    <property type="entry name" value="PRK02304.1-5"/>
    <property type="match status" value="1"/>
</dbReference>
<dbReference type="PANTHER" id="PTHR32315">
    <property type="entry name" value="ADENINE PHOSPHORIBOSYLTRANSFERASE"/>
    <property type="match status" value="1"/>
</dbReference>
<dbReference type="PANTHER" id="PTHR32315:SF3">
    <property type="entry name" value="ADENINE PHOSPHORIBOSYLTRANSFERASE"/>
    <property type="match status" value="1"/>
</dbReference>
<dbReference type="Pfam" id="PF00156">
    <property type="entry name" value="Pribosyltran"/>
    <property type="match status" value="1"/>
</dbReference>
<dbReference type="SUPFAM" id="SSF53271">
    <property type="entry name" value="PRTase-like"/>
    <property type="match status" value="1"/>
</dbReference>
<sequence length="170" mass="18630">MDFKQHIAIVPDYPKEGIVFKDITPLMNDGKAYKAATDAIVEYAKERDIDVVVGPEARGFIIGCPVSYALEVGFAPVRKLGKLPREVITVDYGKEYGKDVLTIHKDAIKPGQRVLITDDLLATGGTIEATIKLVEELGGVVAGIAFLVELTYLDGRKMLDGYDVLVLEKY</sequence>
<name>APT_BACC2</name>